<proteinExistence type="evidence at transcript level"/>
<organism>
    <name type="scientific">Spinacia oleracea</name>
    <name type="common">Spinach</name>
    <dbReference type="NCBI Taxonomy" id="3562"/>
    <lineage>
        <taxon>Eukaryota</taxon>
        <taxon>Viridiplantae</taxon>
        <taxon>Streptophyta</taxon>
        <taxon>Embryophyta</taxon>
        <taxon>Tracheophyta</taxon>
        <taxon>Spermatophyta</taxon>
        <taxon>Magnoliopsida</taxon>
        <taxon>eudicotyledons</taxon>
        <taxon>Gunneridae</taxon>
        <taxon>Pentapetalae</taxon>
        <taxon>Caryophyllales</taxon>
        <taxon>Chenopodiaceae</taxon>
        <taxon>Chenopodioideae</taxon>
        <taxon>Anserineae</taxon>
        <taxon>Spinacia</taxon>
    </lineage>
</organism>
<keyword id="KW-0067">ATP-binding</keyword>
<keyword id="KW-0378">Hydrolase</keyword>
<keyword id="KW-0547">Nucleotide-binding</keyword>
<keyword id="KW-0576">Peroxisome</keyword>
<keyword id="KW-0645">Protease</keyword>
<keyword id="KW-1185">Reference proteome</keyword>
<keyword id="KW-0720">Serine protease</keyword>
<sequence length="887" mass="98272">MAEAVELPSRLGILAFRNKVLLPGAIIRIRCTSPSSVKLVEQELWQREEKGLIGIVPVRDASESASVAPVLYPGGGTDSGERNVKSQPGLSDSRKADGKSQQEAVHWHTRGVAARALHLSRGVEKPSGRVTYTVVLEGLCRFRVMELNSRGNYYTARISPLDITKADMEQAQQDPDFVSLARQFKVTAVELISVLEQKQKTGGRTKVLLETVPVHKLADIFVASFEISFEEQLCMLDSIDLKVRLSKATELVDRHLQSIRVAEKITQKVEGQLSKSQREFLLRQQMRAIKEELGDNDDDEDDVAVLERKMQSAGMPANIWKHAQRELRRLKKMQPQQPGYSSSRVYLELLADLPWQNATEEQKLDLRAAKERLDSDHYGLVKVKQRIIEYLAVRKLKPDARGPILCFVGPPGVGKTSLAASISAALGRKFIRISLGGVKDEADIRGHRRTYIGSMPGRLIDGIKRVGVSNPVMLLDEIDKTGSDVRGDPASALLEVLDPEQNKTFNDHYLNVPYDLSKVIFVATANKVQPIPPPLLDRMEVIELPGYTPEEKARIAMQYLIPRVMDQHGLSSEFLQISEDMVKLIIQRYTREAGVRNLERNLSALARAAAVKVAEQDNATAVSKDFHQFTSPVEESRLAEGAEVEMEVIPMGVDNREISNALQVMSPLIVDETMLENVLGPPRYDDRETAERVSNPGVSVGLVWTAFGGEVQFVEASVMAGKGELRLTGQLGDVIKESAQIALTWVRARAMELNLVATGEINLMEGRDIHIHFPAGAVPKDGPSAGVTLVTALVSLLSQKRMRADTAMTGEMTLRGLVLPVGGVKDKVLAAHRYGIKRVILPERNLKDLVEVPSAVLSNLEIIYAKRMEVLEQAFEGGCPWRQRARL</sequence>
<evidence type="ECO:0000255" key="1">
    <source>
        <dbReference type="HAMAP-Rule" id="MF_03121"/>
    </source>
</evidence>
<evidence type="ECO:0000255" key="2">
    <source>
        <dbReference type="PROSITE-ProRule" id="PRU01122"/>
    </source>
</evidence>
<evidence type="ECO:0000255" key="3">
    <source>
        <dbReference type="PROSITE-ProRule" id="PRU01123"/>
    </source>
</evidence>
<evidence type="ECO:0000256" key="4">
    <source>
        <dbReference type="SAM" id="MobiDB-lite"/>
    </source>
</evidence>
<evidence type="ECO:0000305" key="5"/>
<protein>
    <recommendedName>
        <fullName evidence="1">Lon protease homolog 2, peroxisomal</fullName>
        <ecNumber evidence="1">3.4.21.53</ecNumber>
    </recommendedName>
</protein>
<feature type="chain" id="PRO_0000026738" description="Lon protease homolog 2, peroxisomal">
    <location>
        <begin position="1"/>
        <end position="887"/>
    </location>
</feature>
<feature type="domain" description="Lon N-terminal" evidence="3">
    <location>
        <begin position="11"/>
        <end position="256"/>
    </location>
</feature>
<feature type="domain" description="Lon proteolytic" evidence="2">
    <location>
        <begin position="693"/>
        <end position="878"/>
    </location>
</feature>
<feature type="region of interest" description="Disordered" evidence="4">
    <location>
        <begin position="72"/>
        <end position="101"/>
    </location>
</feature>
<feature type="short sequence motif" description="Microbody targeting signal" evidence="1">
    <location>
        <begin position="885"/>
        <end position="887"/>
    </location>
</feature>
<feature type="active site" evidence="1">
    <location>
        <position position="784"/>
    </location>
</feature>
<feature type="active site" evidence="1">
    <location>
        <position position="827"/>
    </location>
</feature>
<feature type="binding site" evidence="1">
    <location>
        <begin position="409"/>
        <end position="416"/>
    </location>
    <ligand>
        <name>ATP</name>
        <dbReference type="ChEBI" id="CHEBI:30616"/>
    </ligand>
</feature>
<reference key="1">
    <citation type="submission" date="1997-06" db="EMBL/GenBank/DDBJ databases">
        <authorList>
            <person name="Inagaki N."/>
            <person name="Watanabe A."/>
            <person name="Satoh K."/>
        </authorList>
    </citation>
    <scope>NUCLEOTIDE SEQUENCE [MRNA]</scope>
    <source>
        <tissue>Leaf</tissue>
    </source>
</reference>
<comment type="function">
    <text evidence="1">ATP-dependent serine protease that mediates the selective degradation of misfolded and unassembled polypeptides in the peroxisomal matrix. Necessary for type 2 peroxisome targeting signal (PTS2)-containing protein processing and facilitates peroxisome matrix protein import.</text>
</comment>
<comment type="catalytic activity">
    <reaction evidence="1">
        <text>Hydrolysis of proteins in presence of ATP.</text>
        <dbReference type="EC" id="3.4.21.53"/>
    </reaction>
</comment>
<comment type="subcellular location">
    <subcellularLocation>
        <location evidence="1">Peroxisome matrix</location>
    </subcellularLocation>
</comment>
<comment type="similarity">
    <text evidence="1">Belongs to the peptidase S16 family.</text>
</comment>
<comment type="sequence caution" evidence="5">
    <conflict type="frameshift">
        <sequence resource="EMBL-CDS" id="BAA20482"/>
    </conflict>
</comment>
<accession>O04979</accession>
<dbReference type="EC" id="3.4.21.53" evidence="1"/>
<dbReference type="EMBL" id="D85610">
    <property type="protein sequence ID" value="BAA20482.1"/>
    <property type="status" value="ALT_FRAME"/>
    <property type="molecule type" value="mRNA"/>
</dbReference>
<dbReference type="PIR" id="T09142">
    <property type="entry name" value="T09142"/>
</dbReference>
<dbReference type="SMR" id="O04979"/>
<dbReference type="MEROPS" id="S16.003"/>
<dbReference type="Proteomes" id="UP001155700">
    <property type="component" value="Unplaced"/>
</dbReference>
<dbReference type="GO" id="GO:0005782">
    <property type="term" value="C:peroxisomal matrix"/>
    <property type="evidence" value="ECO:0000318"/>
    <property type="project" value="GO_Central"/>
</dbReference>
<dbReference type="GO" id="GO:0005524">
    <property type="term" value="F:ATP binding"/>
    <property type="evidence" value="ECO:0007669"/>
    <property type="project" value="UniProtKB-UniRule"/>
</dbReference>
<dbReference type="GO" id="GO:0016887">
    <property type="term" value="F:ATP hydrolysis activity"/>
    <property type="evidence" value="ECO:0007669"/>
    <property type="project" value="UniProtKB-UniRule"/>
</dbReference>
<dbReference type="GO" id="GO:0004176">
    <property type="term" value="F:ATP-dependent peptidase activity"/>
    <property type="evidence" value="ECO:0007669"/>
    <property type="project" value="UniProtKB-UniRule"/>
</dbReference>
<dbReference type="GO" id="GO:0004252">
    <property type="term" value="F:serine-type endopeptidase activity"/>
    <property type="evidence" value="ECO:0007669"/>
    <property type="project" value="UniProtKB-UniRule"/>
</dbReference>
<dbReference type="GO" id="GO:0016558">
    <property type="term" value="P:protein import into peroxisome matrix"/>
    <property type="evidence" value="ECO:0007669"/>
    <property type="project" value="UniProtKB-UniRule"/>
</dbReference>
<dbReference type="GO" id="GO:0016485">
    <property type="term" value="P:protein processing"/>
    <property type="evidence" value="ECO:0000318"/>
    <property type="project" value="GO_Central"/>
</dbReference>
<dbReference type="GO" id="GO:0006515">
    <property type="term" value="P:protein quality control for misfolded or incompletely synthesized proteins"/>
    <property type="evidence" value="ECO:0007669"/>
    <property type="project" value="UniProtKB-UniRule"/>
</dbReference>
<dbReference type="GO" id="GO:0006625">
    <property type="term" value="P:protein targeting to peroxisome"/>
    <property type="evidence" value="ECO:0000318"/>
    <property type="project" value="GO_Central"/>
</dbReference>
<dbReference type="CDD" id="cd19500">
    <property type="entry name" value="RecA-like_Lon"/>
    <property type="match status" value="1"/>
</dbReference>
<dbReference type="FunFam" id="1.20.5.5270:FF:000002">
    <property type="entry name" value="Lon protease homolog"/>
    <property type="match status" value="1"/>
</dbReference>
<dbReference type="FunFam" id="1.20.58.1480:FF:000005">
    <property type="entry name" value="Lon protease homolog 2, peroxisomal"/>
    <property type="match status" value="1"/>
</dbReference>
<dbReference type="FunFam" id="3.30.230.10:FF:000019">
    <property type="entry name" value="Lon protease homolog 2, peroxisomal"/>
    <property type="match status" value="1"/>
</dbReference>
<dbReference type="FunFam" id="3.40.50.300:FF:000651">
    <property type="entry name" value="Lon protease homolog 2, peroxisomal"/>
    <property type="match status" value="1"/>
</dbReference>
<dbReference type="Gene3D" id="1.10.8.60">
    <property type="match status" value="1"/>
</dbReference>
<dbReference type="Gene3D" id="1.20.5.5270">
    <property type="match status" value="1"/>
</dbReference>
<dbReference type="Gene3D" id="1.20.58.1480">
    <property type="match status" value="1"/>
</dbReference>
<dbReference type="Gene3D" id="3.30.230.10">
    <property type="match status" value="1"/>
</dbReference>
<dbReference type="Gene3D" id="2.30.130.40">
    <property type="entry name" value="LON domain-like"/>
    <property type="match status" value="1"/>
</dbReference>
<dbReference type="Gene3D" id="3.40.50.300">
    <property type="entry name" value="P-loop containing nucleotide triphosphate hydrolases"/>
    <property type="match status" value="1"/>
</dbReference>
<dbReference type="HAMAP" id="MF_03121">
    <property type="entry name" value="lonp2_euk"/>
    <property type="match status" value="1"/>
</dbReference>
<dbReference type="InterPro" id="IPR003593">
    <property type="entry name" value="AAA+_ATPase"/>
</dbReference>
<dbReference type="InterPro" id="IPR003959">
    <property type="entry name" value="ATPase_AAA_core"/>
</dbReference>
<dbReference type="InterPro" id="IPR004815">
    <property type="entry name" value="Lon_bac/euk-typ"/>
</dbReference>
<dbReference type="InterPro" id="IPR054594">
    <property type="entry name" value="Lon_lid"/>
</dbReference>
<dbReference type="InterPro" id="IPR008269">
    <property type="entry name" value="Lon_proteolytic"/>
</dbReference>
<dbReference type="InterPro" id="IPR027065">
    <property type="entry name" value="Lon_Prtase"/>
</dbReference>
<dbReference type="InterPro" id="IPR003111">
    <property type="entry name" value="Lon_prtase_N"/>
</dbReference>
<dbReference type="InterPro" id="IPR046336">
    <property type="entry name" value="Lon_prtase_N_sf"/>
</dbReference>
<dbReference type="InterPro" id="IPR027501">
    <property type="entry name" value="Lonp2_euk"/>
</dbReference>
<dbReference type="InterPro" id="IPR027417">
    <property type="entry name" value="P-loop_NTPase"/>
</dbReference>
<dbReference type="InterPro" id="IPR008268">
    <property type="entry name" value="Peptidase_S16_AS"/>
</dbReference>
<dbReference type="InterPro" id="IPR015947">
    <property type="entry name" value="PUA-like_sf"/>
</dbReference>
<dbReference type="InterPro" id="IPR020568">
    <property type="entry name" value="Ribosomal_Su5_D2-typ_SF"/>
</dbReference>
<dbReference type="InterPro" id="IPR014721">
    <property type="entry name" value="Ribsml_uS5_D2-typ_fold_subgr"/>
</dbReference>
<dbReference type="NCBIfam" id="TIGR00763">
    <property type="entry name" value="lon"/>
    <property type="match status" value="1"/>
</dbReference>
<dbReference type="PANTHER" id="PTHR10046">
    <property type="entry name" value="ATP DEPENDENT LON PROTEASE FAMILY MEMBER"/>
    <property type="match status" value="1"/>
</dbReference>
<dbReference type="Pfam" id="PF00004">
    <property type="entry name" value="AAA"/>
    <property type="match status" value="1"/>
</dbReference>
<dbReference type="Pfam" id="PF05362">
    <property type="entry name" value="Lon_C"/>
    <property type="match status" value="1"/>
</dbReference>
<dbReference type="Pfam" id="PF22667">
    <property type="entry name" value="Lon_lid"/>
    <property type="match status" value="1"/>
</dbReference>
<dbReference type="Pfam" id="PF02190">
    <property type="entry name" value="LON_substr_bdg"/>
    <property type="match status" value="1"/>
</dbReference>
<dbReference type="PIRSF" id="PIRSF001174">
    <property type="entry name" value="Lon_proteas"/>
    <property type="match status" value="1"/>
</dbReference>
<dbReference type="PRINTS" id="PR00830">
    <property type="entry name" value="ENDOLAPTASE"/>
</dbReference>
<dbReference type="SMART" id="SM00382">
    <property type="entry name" value="AAA"/>
    <property type="match status" value="1"/>
</dbReference>
<dbReference type="SMART" id="SM00464">
    <property type="entry name" value="LON"/>
    <property type="match status" value="1"/>
</dbReference>
<dbReference type="SUPFAM" id="SSF52540">
    <property type="entry name" value="P-loop containing nucleoside triphosphate hydrolases"/>
    <property type="match status" value="1"/>
</dbReference>
<dbReference type="SUPFAM" id="SSF88697">
    <property type="entry name" value="PUA domain-like"/>
    <property type="match status" value="1"/>
</dbReference>
<dbReference type="SUPFAM" id="SSF54211">
    <property type="entry name" value="Ribosomal protein S5 domain 2-like"/>
    <property type="match status" value="1"/>
</dbReference>
<dbReference type="PROSITE" id="PS51787">
    <property type="entry name" value="LON_N"/>
    <property type="match status" value="1"/>
</dbReference>
<dbReference type="PROSITE" id="PS51786">
    <property type="entry name" value="LON_PROTEOLYTIC"/>
    <property type="match status" value="1"/>
</dbReference>
<dbReference type="PROSITE" id="PS01046">
    <property type="entry name" value="LON_SER"/>
    <property type="match status" value="1"/>
</dbReference>
<name>LONP2_SPIOL</name>